<evidence type="ECO:0000255" key="1">
    <source>
        <dbReference type="HAMAP-Rule" id="MF_00735"/>
    </source>
</evidence>
<dbReference type="EC" id="2.1.1.-" evidence="1"/>
<dbReference type="EMBL" id="CP001010">
    <property type="protein sequence ID" value="ACB43525.1"/>
    <property type="molecule type" value="Genomic_DNA"/>
</dbReference>
<dbReference type="SMR" id="B1XT48"/>
<dbReference type="STRING" id="452638.Pnec_0228"/>
<dbReference type="KEGG" id="pne:Pnec_0228"/>
<dbReference type="eggNOG" id="COG2264">
    <property type="taxonomic scope" value="Bacteria"/>
</dbReference>
<dbReference type="HOGENOM" id="CLU_049382_4_1_4"/>
<dbReference type="OrthoDB" id="9785995at2"/>
<dbReference type="GO" id="GO:0005829">
    <property type="term" value="C:cytosol"/>
    <property type="evidence" value="ECO:0007669"/>
    <property type="project" value="TreeGrafter"/>
</dbReference>
<dbReference type="GO" id="GO:0016279">
    <property type="term" value="F:protein-lysine N-methyltransferase activity"/>
    <property type="evidence" value="ECO:0007669"/>
    <property type="project" value="TreeGrafter"/>
</dbReference>
<dbReference type="GO" id="GO:0032259">
    <property type="term" value="P:methylation"/>
    <property type="evidence" value="ECO:0007669"/>
    <property type="project" value="UniProtKB-KW"/>
</dbReference>
<dbReference type="CDD" id="cd02440">
    <property type="entry name" value="AdoMet_MTases"/>
    <property type="match status" value="1"/>
</dbReference>
<dbReference type="Gene3D" id="3.40.50.150">
    <property type="entry name" value="Vaccinia Virus protein VP39"/>
    <property type="match status" value="1"/>
</dbReference>
<dbReference type="HAMAP" id="MF_00735">
    <property type="entry name" value="Methyltr_PrmA"/>
    <property type="match status" value="1"/>
</dbReference>
<dbReference type="InterPro" id="IPR050078">
    <property type="entry name" value="Ribosomal_L11_MeTrfase_PrmA"/>
</dbReference>
<dbReference type="InterPro" id="IPR004498">
    <property type="entry name" value="Ribosomal_PrmA_MeTrfase"/>
</dbReference>
<dbReference type="InterPro" id="IPR029063">
    <property type="entry name" value="SAM-dependent_MTases_sf"/>
</dbReference>
<dbReference type="NCBIfam" id="TIGR00406">
    <property type="entry name" value="prmA"/>
    <property type="match status" value="1"/>
</dbReference>
<dbReference type="PANTHER" id="PTHR43648">
    <property type="entry name" value="ELECTRON TRANSFER FLAVOPROTEIN BETA SUBUNIT LYSINE METHYLTRANSFERASE"/>
    <property type="match status" value="1"/>
</dbReference>
<dbReference type="PANTHER" id="PTHR43648:SF1">
    <property type="entry name" value="ELECTRON TRANSFER FLAVOPROTEIN BETA SUBUNIT LYSINE METHYLTRANSFERASE"/>
    <property type="match status" value="1"/>
</dbReference>
<dbReference type="Pfam" id="PF06325">
    <property type="entry name" value="PrmA"/>
    <property type="match status" value="1"/>
</dbReference>
<dbReference type="PIRSF" id="PIRSF000401">
    <property type="entry name" value="RPL11_MTase"/>
    <property type="match status" value="1"/>
</dbReference>
<dbReference type="SUPFAM" id="SSF53335">
    <property type="entry name" value="S-adenosyl-L-methionine-dependent methyltransferases"/>
    <property type="match status" value="1"/>
</dbReference>
<keyword id="KW-0963">Cytoplasm</keyword>
<keyword id="KW-0489">Methyltransferase</keyword>
<keyword id="KW-0949">S-adenosyl-L-methionine</keyword>
<keyword id="KW-0808">Transferase</keyword>
<accession>B1XT48</accession>
<feature type="chain" id="PRO_1000192649" description="Ribosomal protein L11 methyltransferase">
    <location>
        <begin position="1"/>
        <end position="328"/>
    </location>
</feature>
<feature type="binding site" evidence="1">
    <location>
        <position position="158"/>
    </location>
    <ligand>
        <name>S-adenosyl-L-methionine</name>
        <dbReference type="ChEBI" id="CHEBI:59789"/>
    </ligand>
</feature>
<feature type="binding site" evidence="1">
    <location>
        <position position="180"/>
    </location>
    <ligand>
        <name>S-adenosyl-L-methionine</name>
        <dbReference type="ChEBI" id="CHEBI:59789"/>
    </ligand>
</feature>
<feature type="binding site" evidence="1">
    <location>
        <position position="202"/>
    </location>
    <ligand>
        <name>S-adenosyl-L-methionine</name>
        <dbReference type="ChEBI" id="CHEBI:59789"/>
    </ligand>
</feature>
<feature type="binding site" evidence="1">
    <location>
        <position position="246"/>
    </location>
    <ligand>
        <name>S-adenosyl-L-methionine</name>
        <dbReference type="ChEBI" id="CHEBI:59789"/>
    </ligand>
</feature>
<comment type="function">
    <text evidence="1">Methylates ribosomal protein L11.</text>
</comment>
<comment type="catalytic activity">
    <reaction evidence="1">
        <text>L-lysyl-[protein] + 3 S-adenosyl-L-methionine = N(6),N(6),N(6)-trimethyl-L-lysyl-[protein] + 3 S-adenosyl-L-homocysteine + 3 H(+)</text>
        <dbReference type="Rhea" id="RHEA:54192"/>
        <dbReference type="Rhea" id="RHEA-COMP:9752"/>
        <dbReference type="Rhea" id="RHEA-COMP:13826"/>
        <dbReference type="ChEBI" id="CHEBI:15378"/>
        <dbReference type="ChEBI" id="CHEBI:29969"/>
        <dbReference type="ChEBI" id="CHEBI:57856"/>
        <dbReference type="ChEBI" id="CHEBI:59789"/>
        <dbReference type="ChEBI" id="CHEBI:61961"/>
    </reaction>
</comment>
<comment type="subcellular location">
    <subcellularLocation>
        <location evidence="1">Cytoplasm</location>
    </subcellularLocation>
</comment>
<comment type="similarity">
    <text evidence="1">Belongs to the methyltransferase superfamily. PrmA family.</text>
</comment>
<sequence length="328" mass="35287">MSYRELIFTVAAETAEPLGDALLDLGALSVTVEDDAAGGYDENPLYEEPGLSPEVQAWDRSAVTALFNPEIDTSGSAEFIPELLASLKEVGFNLAPPQEKTIEEQDWVRLTQSQFSPIQIGERIWVVPSWHDAPNDPNAICLAVDPGLAFGTGSHPTTHLCLLWLEQQSHLKNQSLLDYGCGSGILAIAAAKLGCNPVIGTDIDPQAMVAARSNADINHTAVTFVLPNEGATELAAETKYDIVMANILANPLQVLAPALVNKMKLGGRIVLSGVLARQAEEVIATYSQWLTPSVWKESEGWVCLHGTLNQDKQNTASTVFAAPAQKKF</sequence>
<proteinExistence type="inferred from homology"/>
<protein>
    <recommendedName>
        <fullName evidence="1">Ribosomal protein L11 methyltransferase</fullName>
        <shortName evidence="1">L11 Mtase</shortName>
        <ecNumber evidence="1">2.1.1.-</ecNumber>
    </recommendedName>
</protein>
<name>PRMA_POLNS</name>
<gene>
    <name evidence="1" type="primary">prmA</name>
    <name type="ordered locus">Pnec_0228</name>
</gene>
<reference key="1">
    <citation type="journal article" date="2013" name="Proc. Natl. Acad. Sci. U.S.A.">
        <title>Polynucleobacter necessarius, a model for genome reduction in both free-living and symbiotic bacteria.</title>
        <authorList>
            <person name="Boscaro V."/>
            <person name="Felletti M."/>
            <person name="Vannini C."/>
            <person name="Ackerman M.S."/>
            <person name="Chain P.S."/>
            <person name="Malfatti S."/>
            <person name="Vergez L.M."/>
            <person name="Shin M."/>
            <person name="Doak T.G."/>
            <person name="Lynch M."/>
            <person name="Petroni G."/>
        </authorList>
    </citation>
    <scope>NUCLEOTIDE SEQUENCE [LARGE SCALE GENOMIC DNA]</scope>
    <source>
        <strain>STIR1</strain>
    </source>
</reference>
<organism>
    <name type="scientific">Polynucleobacter necessarius subsp. necessarius (strain STIR1)</name>
    <dbReference type="NCBI Taxonomy" id="452638"/>
    <lineage>
        <taxon>Bacteria</taxon>
        <taxon>Pseudomonadati</taxon>
        <taxon>Pseudomonadota</taxon>
        <taxon>Betaproteobacteria</taxon>
        <taxon>Burkholderiales</taxon>
        <taxon>Burkholderiaceae</taxon>
        <taxon>Polynucleobacter</taxon>
    </lineage>
</organism>